<evidence type="ECO:0000255" key="1">
    <source>
        <dbReference type="PROSITE-ProRule" id="PRU00981"/>
    </source>
</evidence>
<evidence type="ECO:0000256" key="2">
    <source>
        <dbReference type="SAM" id="MobiDB-lite"/>
    </source>
</evidence>
<accession>P10166</accession>
<accession>Q5FWI7</accession>
<name>MYCL_MOUSE</name>
<reference key="1">
    <citation type="journal article" date="1987" name="EMBO J.">
        <title>Structure and expression of the murine L-myc gene.</title>
        <authorList>
            <person name="Legouy E."/>
            <person name="DePinho R.A."/>
            <person name="Zimmerman K."/>
            <person name="Collum R."/>
            <person name="Yancopoulos G.D."/>
            <person name="Mitsock L."/>
            <person name="Kriz R."/>
            <person name="Alt F.W."/>
        </authorList>
    </citation>
    <scope>NUCLEOTIDE SEQUENCE [GENOMIC DNA]</scope>
    <source>
        <strain>BALB/cJ</strain>
    </source>
</reference>
<reference key="2">
    <citation type="journal article" date="2004" name="Genome Res.">
        <title>The status, quality, and expansion of the NIH full-length cDNA project: the Mammalian Gene Collection (MGC).</title>
        <authorList>
            <consortium name="The MGC Project Team"/>
        </authorList>
    </citation>
    <scope>NUCLEOTIDE SEQUENCE [LARGE SCALE MRNA]</scope>
    <source>
        <strain>C57BL/6J</strain>
        <tissue>Brain</tissue>
    </source>
</reference>
<organism>
    <name type="scientific">Mus musculus</name>
    <name type="common">Mouse</name>
    <dbReference type="NCBI Taxonomy" id="10090"/>
    <lineage>
        <taxon>Eukaryota</taxon>
        <taxon>Metazoa</taxon>
        <taxon>Chordata</taxon>
        <taxon>Craniata</taxon>
        <taxon>Vertebrata</taxon>
        <taxon>Euteleostomi</taxon>
        <taxon>Mammalia</taxon>
        <taxon>Eutheria</taxon>
        <taxon>Euarchontoglires</taxon>
        <taxon>Glires</taxon>
        <taxon>Rodentia</taxon>
        <taxon>Myomorpha</taxon>
        <taxon>Muroidea</taxon>
        <taxon>Muridae</taxon>
        <taxon>Murinae</taxon>
        <taxon>Mus</taxon>
        <taxon>Mus</taxon>
    </lineage>
</organism>
<protein>
    <recommendedName>
        <fullName>Protein L-Myc</fullName>
    </recommendedName>
</protein>
<sequence>MDFDSYQHYFYDYDCGEDFYRSTAPSEDIWKKFELVPSPPTSPPWGSGPGAVDPASGINPGEPWPGGGAGDEAESRGHSKAWGRNYASIIRRDCMWSGFSARERLERVVSDRLAPGAPRGNPPKAPATPDGTPSLEASNPAPATQCQLGEPKTQACSGSESPSDSEGEEIDVVTVEKRRSLDIRKPVTITVRADPLDPCMKHFHISIHQQQHNYAARFPPESCSQEGDPEPGPQEEAPEIEAPKEKEEEEEEEEEEEIVSPPPVGSEAPQSCHPKPVSSDTEDVTKRKNHNFLERKRRNDLRSRFLALRDQVPTLASCSKAPKVVILSKALEYLQALVGAEKKMATEKRQLRCRQQQLQKRIAYLSGY</sequence>
<comment type="subunit">
    <text>Efficient DNA binding requires dimerization with another bHLH protein. Binds DNA as a heterodimer with MAX.</text>
</comment>
<comment type="subcellular location">
    <subcellularLocation>
        <location evidence="1">Nucleus</location>
    </subcellularLocation>
</comment>
<keyword id="KW-0238">DNA-binding</keyword>
<keyword id="KW-0539">Nucleus</keyword>
<keyword id="KW-1185">Reference proteome</keyword>
<dbReference type="EMBL" id="X13945">
    <property type="protein sequence ID" value="CAA32128.1"/>
    <property type="molecule type" value="Genomic_DNA"/>
</dbReference>
<dbReference type="EMBL" id="BC053059">
    <property type="protein sequence ID" value="AAH53059.1"/>
    <property type="molecule type" value="mRNA"/>
</dbReference>
<dbReference type="EMBL" id="BC089346">
    <property type="protein sequence ID" value="AAH89346.1"/>
    <property type="molecule type" value="mRNA"/>
</dbReference>
<dbReference type="CCDS" id="CCDS18606.1"/>
<dbReference type="PIR" id="S03017">
    <property type="entry name" value="TVMSML"/>
</dbReference>
<dbReference type="RefSeq" id="NP_001290050.1">
    <property type="nucleotide sequence ID" value="NM_001303121.1"/>
</dbReference>
<dbReference type="RefSeq" id="NP_001408106.1">
    <property type="nucleotide sequence ID" value="NM_001421177.1"/>
</dbReference>
<dbReference type="RefSeq" id="NP_032532.1">
    <property type="nucleotide sequence ID" value="NM_008506.4"/>
</dbReference>
<dbReference type="RefSeq" id="XP_006502884.1">
    <property type="nucleotide sequence ID" value="XM_006502821.3"/>
</dbReference>
<dbReference type="SMR" id="P10166"/>
<dbReference type="BioGRID" id="201184">
    <property type="interactions" value="1"/>
</dbReference>
<dbReference type="FunCoup" id="P10166">
    <property type="interactions" value="802"/>
</dbReference>
<dbReference type="IntAct" id="P10166">
    <property type="interactions" value="1"/>
</dbReference>
<dbReference type="STRING" id="10090.ENSMUSP00000030407"/>
<dbReference type="GlyGen" id="P10166">
    <property type="glycosylation" value="1 site"/>
</dbReference>
<dbReference type="iPTMnet" id="P10166"/>
<dbReference type="PhosphoSitePlus" id="P10166"/>
<dbReference type="PaxDb" id="10090-ENSMUSP00000030407"/>
<dbReference type="PeptideAtlas" id="P10166"/>
<dbReference type="Antibodypedia" id="17920">
    <property type="antibodies" value="160 antibodies from 28 providers"/>
</dbReference>
<dbReference type="DNASU" id="16918"/>
<dbReference type="Ensembl" id="ENSMUST00000030407.8">
    <property type="protein sequence ID" value="ENSMUSP00000030407.8"/>
    <property type="gene ID" value="ENSMUSG00000028654.14"/>
</dbReference>
<dbReference type="Ensembl" id="ENSMUST00000106252.9">
    <property type="protein sequence ID" value="ENSMUSP00000101859.3"/>
    <property type="gene ID" value="ENSMUSG00000028654.14"/>
</dbReference>
<dbReference type="GeneID" id="16918"/>
<dbReference type="KEGG" id="mmu:16918"/>
<dbReference type="UCSC" id="uc008uop.2">
    <property type="organism name" value="mouse"/>
</dbReference>
<dbReference type="AGR" id="MGI:96799"/>
<dbReference type="CTD" id="4610"/>
<dbReference type="MGI" id="MGI:96799">
    <property type="gene designation" value="Mycl"/>
</dbReference>
<dbReference type="VEuPathDB" id="HostDB:ENSMUSG00000028654"/>
<dbReference type="eggNOG" id="ENOG502QWSU">
    <property type="taxonomic scope" value="Eukaryota"/>
</dbReference>
<dbReference type="GeneTree" id="ENSGT00940000158613"/>
<dbReference type="HOGENOM" id="CLU_052560_0_0_1"/>
<dbReference type="InParanoid" id="P10166"/>
<dbReference type="OMA" id="RWEMEYD"/>
<dbReference type="OrthoDB" id="5964374at2759"/>
<dbReference type="PhylomeDB" id="P10166"/>
<dbReference type="TreeFam" id="TF106001"/>
<dbReference type="BioGRID-ORCS" id="16918">
    <property type="hits" value="2 hits in 77 CRISPR screens"/>
</dbReference>
<dbReference type="ChiTaRS" id="Mycl">
    <property type="organism name" value="mouse"/>
</dbReference>
<dbReference type="PRO" id="PR:P10166"/>
<dbReference type="Proteomes" id="UP000000589">
    <property type="component" value="Chromosome 4"/>
</dbReference>
<dbReference type="RNAct" id="P10166">
    <property type="molecule type" value="protein"/>
</dbReference>
<dbReference type="Bgee" id="ENSMUSG00000028654">
    <property type="expression patterns" value="Expressed in urinary bladder urothelium and 238 other cell types or tissues"/>
</dbReference>
<dbReference type="ExpressionAtlas" id="P10166">
    <property type="expression patterns" value="baseline and differential"/>
</dbReference>
<dbReference type="GO" id="GO:0005694">
    <property type="term" value="C:chromosome"/>
    <property type="evidence" value="ECO:0007669"/>
    <property type="project" value="Ensembl"/>
</dbReference>
<dbReference type="GO" id="GO:0005654">
    <property type="term" value="C:nucleoplasm"/>
    <property type="evidence" value="ECO:0007669"/>
    <property type="project" value="Ensembl"/>
</dbReference>
<dbReference type="GO" id="GO:0003677">
    <property type="term" value="F:DNA binding"/>
    <property type="evidence" value="ECO:0007669"/>
    <property type="project" value="UniProtKB-KW"/>
</dbReference>
<dbReference type="GO" id="GO:0003700">
    <property type="term" value="F:DNA-binding transcription factor activity"/>
    <property type="evidence" value="ECO:0007669"/>
    <property type="project" value="InterPro"/>
</dbReference>
<dbReference type="GO" id="GO:0046983">
    <property type="term" value="F:protein dimerization activity"/>
    <property type="evidence" value="ECO:0007669"/>
    <property type="project" value="InterPro"/>
</dbReference>
<dbReference type="GO" id="GO:0045607">
    <property type="term" value="P:regulation of inner ear auditory receptor cell differentiation"/>
    <property type="evidence" value="ECO:0000316"/>
    <property type="project" value="MGI"/>
</dbReference>
<dbReference type="CDD" id="cd11457">
    <property type="entry name" value="bHLHzip_L-Myc"/>
    <property type="match status" value="1"/>
</dbReference>
<dbReference type="FunFam" id="4.10.280.10:FF:000019">
    <property type="entry name" value="Myc proto-oncogene protein"/>
    <property type="match status" value="1"/>
</dbReference>
<dbReference type="Gene3D" id="4.10.280.10">
    <property type="entry name" value="Helix-loop-helix DNA-binding domain"/>
    <property type="match status" value="1"/>
</dbReference>
<dbReference type="InterPro" id="IPR011598">
    <property type="entry name" value="bHLH_dom"/>
</dbReference>
<dbReference type="InterPro" id="IPR036638">
    <property type="entry name" value="HLH_DNA-bd_sf"/>
</dbReference>
<dbReference type="InterPro" id="IPR050433">
    <property type="entry name" value="Myc_transcription_factors"/>
</dbReference>
<dbReference type="InterPro" id="IPR002418">
    <property type="entry name" value="Tscrpt_reg_Myc"/>
</dbReference>
<dbReference type="InterPro" id="IPR012682">
    <property type="entry name" value="Tscrpt_reg_Myc_N"/>
</dbReference>
<dbReference type="PANTHER" id="PTHR45851">
    <property type="entry name" value="MYC PROTO-ONCOGENE"/>
    <property type="match status" value="1"/>
</dbReference>
<dbReference type="Pfam" id="PF00010">
    <property type="entry name" value="HLH"/>
    <property type="match status" value="1"/>
</dbReference>
<dbReference type="Pfam" id="PF01056">
    <property type="entry name" value="Myc_N"/>
    <property type="match status" value="2"/>
</dbReference>
<dbReference type="PIRSF" id="PIRSF001705">
    <property type="entry name" value="Myc_protein"/>
    <property type="match status" value="1"/>
</dbReference>
<dbReference type="PRINTS" id="PR00044">
    <property type="entry name" value="LEUZIPPRMYC"/>
</dbReference>
<dbReference type="SMART" id="SM00353">
    <property type="entry name" value="HLH"/>
    <property type="match status" value="1"/>
</dbReference>
<dbReference type="SUPFAM" id="SSF47459">
    <property type="entry name" value="HLH, helix-loop-helix DNA-binding domain"/>
    <property type="match status" value="1"/>
</dbReference>
<dbReference type="PROSITE" id="PS50888">
    <property type="entry name" value="BHLH"/>
    <property type="match status" value="1"/>
</dbReference>
<feature type="chain" id="PRO_0000127334" description="Protein L-Myc">
    <location>
        <begin position="1"/>
        <end position="368"/>
    </location>
</feature>
<feature type="domain" description="bHLH" evidence="1">
    <location>
        <begin position="285"/>
        <end position="337"/>
    </location>
</feature>
<feature type="region of interest" description="Disordered" evidence="2">
    <location>
        <begin position="39"/>
        <end position="79"/>
    </location>
</feature>
<feature type="region of interest" description="Disordered" evidence="2">
    <location>
        <begin position="112"/>
        <end position="179"/>
    </location>
</feature>
<feature type="region of interest" description="Disordered" evidence="2">
    <location>
        <begin position="218"/>
        <end position="295"/>
    </location>
</feature>
<feature type="region of interest" description="Leucine-zipper">
    <location>
        <begin position="337"/>
        <end position="365"/>
    </location>
</feature>
<feature type="compositionally biased region" description="Polar residues" evidence="2">
    <location>
        <begin position="135"/>
        <end position="147"/>
    </location>
</feature>
<feature type="compositionally biased region" description="Acidic residues" evidence="2">
    <location>
        <begin position="247"/>
        <end position="258"/>
    </location>
</feature>
<feature type="compositionally biased region" description="Basic and acidic residues" evidence="2">
    <location>
        <begin position="283"/>
        <end position="294"/>
    </location>
</feature>
<gene>
    <name type="primary">Mycl</name>
    <name type="synonym">Lmyc1</name>
    <name type="synonym">Mycl1</name>
</gene>
<proteinExistence type="evidence at transcript level"/>